<gene>
    <name evidence="1" type="primary">rpsD</name>
    <name type="ordered locus">MMAR_1089</name>
</gene>
<proteinExistence type="inferred from homology"/>
<evidence type="ECO:0000255" key="1">
    <source>
        <dbReference type="HAMAP-Rule" id="MF_01306"/>
    </source>
</evidence>
<evidence type="ECO:0000256" key="2">
    <source>
        <dbReference type="SAM" id="MobiDB-lite"/>
    </source>
</evidence>
<evidence type="ECO:0000305" key="3"/>
<organism>
    <name type="scientific">Mycobacterium marinum (strain ATCC BAA-535 / M)</name>
    <dbReference type="NCBI Taxonomy" id="216594"/>
    <lineage>
        <taxon>Bacteria</taxon>
        <taxon>Bacillati</taxon>
        <taxon>Actinomycetota</taxon>
        <taxon>Actinomycetes</taxon>
        <taxon>Mycobacteriales</taxon>
        <taxon>Mycobacteriaceae</taxon>
        <taxon>Mycobacterium</taxon>
        <taxon>Mycobacterium ulcerans group</taxon>
    </lineage>
</organism>
<feature type="chain" id="PRO_1000140763" description="Small ribosomal subunit protein uS4">
    <location>
        <begin position="1"/>
        <end position="201"/>
    </location>
</feature>
<feature type="domain" description="S4 RNA-binding" evidence="1">
    <location>
        <begin position="91"/>
        <end position="157"/>
    </location>
</feature>
<feature type="region of interest" description="Disordered" evidence="2">
    <location>
        <begin position="1"/>
        <end position="42"/>
    </location>
</feature>
<dbReference type="EMBL" id="CP000854">
    <property type="protein sequence ID" value="ACC39545.1"/>
    <property type="molecule type" value="Genomic_DNA"/>
</dbReference>
<dbReference type="RefSeq" id="WP_012392977.1">
    <property type="nucleotide sequence ID" value="NC_010612.1"/>
</dbReference>
<dbReference type="SMR" id="B2HCX3"/>
<dbReference type="STRING" id="216594.MMAR_1089"/>
<dbReference type="GeneID" id="34342971"/>
<dbReference type="KEGG" id="mmi:MMAR_1089"/>
<dbReference type="eggNOG" id="COG0522">
    <property type="taxonomic scope" value="Bacteria"/>
</dbReference>
<dbReference type="HOGENOM" id="CLU_092403_0_2_11"/>
<dbReference type="OrthoDB" id="9803672at2"/>
<dbReference type="Proteomes" id="UP000001190">
    <property type="component" value="Chromosome"/>
</dbReference>
<dbReference type="GO" id="GO:0015935">
    <property type="term" value="C:small ribosomal subunit"/>
    <property type="evidence" value="ECO:0007669"/>
    <property type="project" value="InterPro"/>
</dbReference>
<dbReference type="GO" id="GO:0019843">
    <property type="term" value="F:rRNA binding"/>
    <property type="evidence" value="ECO:0007669"/>
    <property type="project" value="UniProtKB-UniRule"/>
</dbReference>
<dbReference type="GO" id="GO:0003735">
    <property type="term" value="F:structural constituent of ribosome"/>
    <property type="evidence" value="ECO:0007669"/>
    <property type="project" value="InterPro"/>
</dbReference>
<dbReference type="GO" id="GO:0042274">
    <property type="term" value="P:ribosomal small subunit biogenesis"/>
    <property type="evidence" value="ECO:0007669"/>
    <property type="project" value="TreeGrafter"/>
</dbReference>
<dbReference type="GO" id="GO:0006412">
    <property type="term" value="P:translation"/>
    <property type="evidence" value="ECO:0007669"/>
    <property type="project" value="UniProtKB-UniRule"/>
</dbReference>
<dbReference type="CDD" id="cd00165">
    <property type="entry name" value="S4"/>
    <property type="match status" value="1"/>
</dbReference>
<dbReference type="FunFam" id="3.10.290.10:FF:000001">
    <property type="entry name" value="30S ribosomal protein S4"/>
    <property type="match status" value="1"/>
</dbReference>
<dbReference type="Gene3D" id="1.10.1050.10">
    <property type="entry name" value="Ribosomal Protein S4 Delta 41, Chain A, domain 1"/>
    <property type="match status" value="1"/>
</dbReference>
<dbReference type="Gene3D" id="3.10.290.10">
    <property type="entry name" value="RNA-binding S4 domain"/>
    <property type="match status" value="1"/>
</dbReference>
<dbReference type="HAMAP" id="MF_01306_B">
    <property type="entry name" value="Ribosomal_uS4_B"/>
    <property type="match status" value="1"/>
</dbReference>
<dbReference type="InterPro" id="IPR022801">
    <property type="entry name" value="Ribosomal_uS4"/>
</dbReference>
<dbReference type="InterPro" id="IPR005709">
    <property type="entry name" value="Ribosomal_uS4_bac-type"/>
</dbReference>
<dbReference type="InterPro" id="IPR018079">
    <property type="entry name" value="Ribosomal_uS4_CS"/>
</dbReference>
<dbReference type="InterPro" id="IPR001912">
    <property type="entry name" value="Ribosomal_uS4_N"/>
</dbReference>
<dbReference type="InterPro" id="IPR002942">
    <property type="entry name" value="S4_RNA-bd"/>
</dbReference>
<dbReference type="InterPro" id="IPR036986">
    <property type="entry name" value="S4_RNA-bd_sf"/>
</dbReference>
<dbReference type="NCBIfam" id="NF003717">
    <property type="entry name" value="PRK05327.1"/>
    <property type="match status" value="1"/>
</dbReference>
<dbReference type="NCBIfam" id="TIGR01017">
    <property type="entry name" value="rpsD_bact"/>
    <property type="match status" value="1"/>
</dbReference>
<dbReference type="PANTHER" id="PTHR11831">
    <property type="entry name" value="30S 40S RIBOSOMAL PROTEIN"/>
    <property type="match status" value="1"/>
</dbReference>
<dbReference type="PANTHER" id="PTHR11831:SF4">
    <property type="entry name" value="SMALL RIBOSOMAL SUBUNIT PROTEIN US4M"/>
    <property type="match status" value="1"/>
</dbReference>
<dbReference type="Pfam" id="PF00163">
    <property type="entry name" value="Ribosomal_S4"/>
    <property type="match status" value="1"/>
</dbReference>
<dbReference type="Pfam" id="PF01479">
    <property type="entry name" value="S4"/>
    <property type="match status" value="1"/>
</dbReference>
<dbReference type="SMART" id="SM01390">
    <property type="entry name" value="Ribosomal_S4"/>
    <property type="match status" value="1"/>
</dbReference>
<dbReference type="SMART" id="SM00363">
    <property type="entry name" value="S4"/>
    <property type="match status" value="1"/>
</dbReference>
<dbReference type="SUPFAM" id="SSF55174">
    <property type="entry name" value="Alpha-L RNA-binding motif"/>
    <property type="match status" value="1"/>
</dbReference>
<dbReference type="PROSITE" id="PS00632">
    <property type="entry name" value="RIBOSOMAL_S4"/>
    <property type="match status" value="1"/>
</dbReference>
<dbReference type="PROSITE" id="PS50889">
    <property type="entry name" value="S4"/>
    <property type="match status" value="1"/>
</dbReference>
<protein>
    <recommendedName>
        <fullName evidence="1">Small ribosomal subunit protein uS4</fullName>
    </recommendedName>
    <alternativeName>
        <fullName evidence="3">30S ribosomal protein S4</fullName>
    </alternativeName>
</protein>
<reference key="1">
    <citation type="journal article" date="2008" name="Genome Res.">
        <title>Insights from the complete genome sequence of Mycobacterium marinum on the evolution of Mycobacterium tuberculosis.</title>
        <authorList>
            <person name="Stinear T.P."/>
            <person name="Seemann T."/>
            <person name="Harrison P.F."/>
            <person name="Jenkin G.A."/>
            <person name="Davies J.K."/>
            <person name="Johnson P.D."/>
            <person name="Abdellah Z."/>
            <person name="Arrowsmith C."/>
            <person name="Chillingworth T."/>
            <person name="Churcher C."/>
            <person name="Clarke K."/>
            <person name="Cronin A."/>
            <person name="Davis P."/>
            <person name="Goodhead I."/>
            <person name="Holroyd N."/>
            <person name="Jagels K."/>
            <person name="Lord A."/>
            <person name="Moule S."/>
            <person name="Mungall K."/>
            <person name="Norbertczak H."/>
            <person name="Quail M.A."/>
            <person name="Rabbinowitsch E."/>
            <person name="Walker D."/>
            <person name="White B."/>
            <person name="Whitehead S."/>
            <person name="Small P.L."/>
            <person name="Brosch R."/>
            <person name="Ramakrishnan L."/>
            <person name="Fischbach M.A."/>
            <person name="Parkhill J."/>
            <person name="Cole S.T."/>
        </authorList>
    </citation>
    <scope>NUCLEOTIDE SEQUENCE [LARGE SCALE GENOMIC DNA]</scope>
    <source>
        <strain>ATCC BAA-535 / M</strain>
    </source>
</reference>
<keyword id="KW-1185">Reference proteome</keyword>
<keyword id="KW-0687">Ribonucleoprotein</keyword>
<keyword id="KW-0689">Ribosomal protein</keyword>
<keyword id="KW-0694">RNA-binding</keyword>
<keyword id="KW-0699">rRNA-binding</keyword>
<accession>B2HCX3</accession>
<sequence>MARYTGPVTRKSRRLGTDLVGGDQSFEKRPYPPGQHGRARIKDSEYRQQLQEKQKARFTYGVMEKQFRRYYEEAVRHSGKTGEELLKILESRLDNVVYRAGLARTRRMARQLVSHGHFSVNGVHVNVPSYRVSQYDIIDVRDNSLNTVPFQIARETAGDRPIPSWLQVVGERQRILIHQLPERAQIEVPLTEQLIVEYYSK</sequence>
<name>RS4_MYCMM</name>
<comment type="function">
    <text evidence="1">One of the primary rRNA binding proteins, it binds directly to 16S rRNA where it nucleates assembly of the body of the 30S subunit.</text>
</comment>
<comment type="function">
    <text evidence="1">With S5 and S12 plays an important role in translational accuracy.</text>
</comment>
<comment type="subunit">
    <text evidence="1">Part of the 30S ribosomal subunit. Contacts protein S5. The interaction surface between S4 and S5 is involved in control of translational fidelity.</text>
</comment>
<comment type="similarity">
    <text evidence="1">Belongs to the universal ribosomal protein uS4 family.</text>
</comment>